<name>HCHA_ECO45</name>
<accession>B7MCM0</accession>
<organism>
    <name type="scientific">Escherichia coli O45:K1 (strain S88 / ExPEC)</name>
    <dbReference type="NCBI Taxonomy" id="585035"/>
    <lineage>
        <taxon>Bacteria</taxon>
        <taxon>Pseudomonadati</taxon>
        <taxon>Pseudomonadota</taxon>
        <taxon>Gammaproteobacteria</taxon>
        <taxon>Enterobacterales</taxon>
        <taxon>Enterobacteriaceae</taxon>
        <taxon>Escherichia</taxon>
    </lineage>
</organism>
<evidence type="ECO:0000255" key="1">
    <source>
        <dbReference type="HAMAP-Rule" id="MF_01046"/>
    </source>
</evidence>
<comment type="function">
    <text evidence="1">Protein and nucleotide deglycase that catalyzes the deglycation of the Maillard adducts formed between amino groups of proteins or nucleotides and reactive carbonyl groups of glyoxals. Thus, functions as a protein deglycase that repairs methylglyoxal- and glyoxal-glycated proteins, and releases repaired proteins and lactate or glycolate, respectively. Deglycates cysteine, arginine and lysine residues in proteins, and thus reactivates these proteins by reversing glycation by glyoxals. Acts on early glycation intermediates (hemithioacetals and aminocarbinols), preventing the formation of Schiff bases and advanced glycation endproducts (AGE). Also functions as a nucleotide deglycase able to repair glycated guanine in the free nucleotide pool (GTP, GDP, GMP, dGTP) and in DNA and RNA. Is thus involved in a major nucleotide repair system named guanine glycation repair (GG repair), dedicated to reversing methylglyoxal and glyoxal damage via nucleotide sanitization and direct nucleic acid repair. Plays an important role in protecting cells from carbonyl stress.</text>
</comment>
<comment type="catalytic activity">
    <reaction evidence="1">
        <text>N(omega)-(1-hydroxy-2-oxopropyl)-L-arginyl-[protein] + H2O = lactate + L-arginyl-[protein] + H(+)</text>
        <dbReference type="Rhea" id="RHEA:49548"/>
        <dbReference type="Rhea" id="RHEA-COMP:10532"/>
        <dbReference type="Rhea" id="RHEA-COMP:12428"/>
        <dbReference type="ChEBI" id="CHEBI:15377"/>
        <dbReference type="ChEBI" id="CHEBI:15378"/>
        <dbReference type="ChEBI" id="CHEBI:24996"/>
        <dbReference type="ChEBI" id="CHEBI:29965"/>
        <dbReference type="ChEBI" id="CHEBI:131708"/>
        <dbReference type="EC" id="3.5.1.124"/>
    </reaction>
</comment>
<comment type="catalytic activity">
    <reaction evidence="1">
        <text>N(6)-(1-hydroxy-2-oxopropyl)-L-lysyl-[protein] + H2O = lactate + L-lysyl-[protein] + H(+)</text>
        <dbReference type="Rhea" id="RHEA:49552"/>
        <dbReference type="Rhea" id="RHEA-COMP:9752"/>
        <dbReference type="Rhea" id="RHEA-COMP:12429"/>
        <dbReference type="ChEBI" id="CHEBI:15377"/>
        <dbReference type="ChEBI" id="CHEBI:15378"/>
        <dbReference type="ChEBI" id="CHEBI:24996"/>
        <dbReference type="ChEBI" id="CHEBI:29969"/>
        <dbReference type="ChEBI" id="CHEBI:131709"/>
        <dbReference type="EC" id="3.5.1.124"/>
    </reaction>
</comment>
<comment type="catalytic activity">
    <reaction evidence="1">
        <text>S-(1-hydroxy-2-oxopropyl)-L-cysteinyl-[protein] + H2O = lactate + L-cysteinyl-[protein] + H(+)</text>
        <dbReference type="Rhea" id="RHEA:49556"/>
        <dbReference type="Rhea" id="RHEA-COMP:10131"/>
        <dbReference type="Rhea" id="RHEA-COMP:12430"/>
        <dbReference type="ChEBI" id="CHEBI:15377"/>
        <dbReference type="ChEBI" id="CHEBI:15378"/>
        <dbReference type="ChEBI" id="CHEBI:24996"/>
        <dbReference type="ChEBI" id="CHEBI:29950"/>
        <dbReference type="ChEBI" id="CHEBI:131710"/>
        <dbReference type="EC" id="3.5.1.124"/>
    </reaction>
</comment>
<comment type="catalytic activity">
    <reaction evidence="1">
        <text>N(omega)-(1-hydroxy-2-oxoethyl)-L-arginyl-[protein] + H2O = L-arginyl-[protein] + glycolate + H(+)</text>
        <dbReference type="Rhea" id="RHEA:57188"/>
        <dbReference type="Rhea" id="RHEA-COMP:10532"/>
        <dbReference type="Rhea" id="RHEA-COMP:14844"/>
        <dbReference type="ChEBI" id="CHEBI:15377"/>
        <dbReference type="ChEBI" id="CHEBI:15378"/>
        <dbReference type="ChEBI" id="CHEBI:29805"/>
        <dbReference type="ChEBI" id="CHEBI:29965"/>
        <dbReference type="ChEBI" id="CHEBI:141553"/>
        <dbReference type="EC" id="3.5.1.124"/>
    </reaction>
</comment>
<comment type="catalytic activity">
    <reaction evidence="1">
        <text>N(6)-(1-hydroxy-2-oxoethyl)-L-lysyl-[protein] + H2O = glycolate + L-lysyl-[protein] + H(+)</text>
        <dbReference type="Rhea" id="RHEA:57192"/>
        <dbReference type="Rhea" id="RHEA-COMP:9752"/>
        <dbReference type="Rhea" id="RHEA-COMP:14845"/>
        <dbReference type="ChEBI" id="CHEBI:15377"/>
        <dbReference type="ChEBI" id="CHEBI:15378"/>
        <dbReference type="ChEBI" id="CHEBI:29805"/>
        <dbReference type="ChEBI" id="CHEBI:29969"/>
        <dbReference type="ChEBI" id="CHEBI:141554"/>
        <dbReference type="EC" id="3.5.1.124"/>
    </reaction>
</comment>
<comment type="catalytic activity">
    <reaction evidence="1">
        <text>S-(1-hydroxy-2-oxoethyl)-L-cysteinyl-[protein] + H2O = glycolate + L-cysteinyl-[protein] + H(+)</text>
        <dbReference type="Rhea" id="RHEA:57196"/>
        <dbReference type="Rhea" id="RHEA-COMP:10131"/>
        <dbReference type="Rhea" id="RHEA-COMP:14846"/>
        <dbReference type="ChEBI" id="CHEBI:15377"/>
        <dbReference type="ChEBI" id="CHEBI:15378"/>
        <dbReference type="ChEBI" id="CHEBI:29805"/>
        <dbReference type="ChEBI" id="CHEBI:29950"/>
        <dbReference type="ChEBI" id="CHEBI:141555"/>
        <dbReference type="EC" id="3.5.1.124"/>
    </reaction>
</comment>
<comment type="catalytic activity">
    <reaction evidence="1">
        <text>N(2)-(1-hydroxy-2-oxopropyl)-dGTP + H2O = lactate + dGTP + H(+)</text>
        <dbReference type="Rhea" id="RHEA:57244"/>
        <dbReference type="ChEBI" id="CHEBI:15377"/>
        <dbReference type="ChEBI" id="CHEBI:15378"/>
        <dbReference type="ChEBI" id="CHEBI:24996"/>
        <dbReference type="ChEBI" id="CHEBI:61429"/>
        <dbReference type="ChEBI" id="CHEBI:141569"/>
    </reaction>
</comment>
<comment type="catalytic activity">
    <reaction evidence="1">
        <text>N(2)-(1-hydroxy-2-oxopropyl)-GTP + H2O = lactate + GTP + H(+)</text>
        <dbReference type="Rhea" id="RHEA:57256"/>
        <dbReference type="ChEBI" id="CHEBI:15377"/>
        <dbReference type="ChEBI" id="CHEBI:15378"/>
        <dbReference type="ChEBI" id="CHEBI:24996"/>
        <dbReference type="ChEBI" id="CHEBI:37565"/>
        <dbReference type="ChEBI" id="CHEBI:141570"/>
    </reaction>
</comment>
<comment type="catalytic activity">
    <reaction evidence="1">
        <text>N(2)-(1-hydroxy-2-oxopropyl)-GDP + H2O = lactate + GDP + H(+)</text>
        <dbReference type="Rhea" id="RHEA:57260"/>
        <dbReference type="ChEBI" id="CHEBI:15377"/>
        <dbReference type="ChEBI" id="CHEBI:15378"/>
        <dbReference type="ChEBI" id="CHEBI:24996"/>
        <dbReference type="ChEBI" id="CHEBI:58189"/>
        <dbReference type="ChEBI" id="CHEBI:141573"/>
    </reaction>
</comment>
<comment type="catalytic activity">
    <reaction evidence="1">
        <text>N(2)-(1-hydroxy-2-oxopropyl)-GMP + H2O = lactate + GMP + H(+)</text>
        <dbReference type="Rhea" id="RHEA:57268"/>
        <dbReference type="ChEBI" id="CHEBI:15377"/>
        <dbReference type="ChEBI" id="CHEBI:15378"/>
        <dbReference type="ChEBI" id="CHEBI:24996"/>
        <dbReference type="ChEBI" id="CHEBI:58115"/>
        <dbReference type="ChEBI" id="CHEBI:141575"/>
    </reaction>
</comment>
<comment type="catalytic activity">
    <reaction evidence="1">
        <text>N(2)-(1-hydroxy-2-oxoethyl)-dGTP + H2O = dGTP + glycolate + H(+)</text>
        <dbReference type="Rhea" id="RHEA:57248"/>
        <dbReference type="ChEBI" id="CHEBI:15377"/>
        <dbReference type="ChEBI" id="CHEBI:15378"/>
        <dbReference type="ChEBI" id="CHEBI:29805"/>
        <dbReference type="ChEBI" id="CHEBI:61429"/>
        <dbReference type="ChEBI" id="CHEBI:141572"/>
    </reaction>
</comment>
<comment type="catalytic activity">
    <reaction evidence="1">
        <text>N(2)-(1-hydroxy-2-oxoethyl)-GTP + H2O = glycolate + GTP + H(+)</text>
        <dbReference type="Rhea" id="RHEA:57252"/>
        <dbReference type="ChEBI" id="CHEBI:15377"/>
        <dbReference type="ChEBI" id="CHEBI:15378"/>
        <dbReference type="ChEBI" id="CHEBI:29805"/>
        <dbReference type="ChEBI" id="CHEBI:37565"/>
        <dbReference type="ChEBI" id="CHEBI:141571"/>
    </reaction>
</comment>
<comment type="catalytic activity">
    <reaction evidence="1">
        <text>N(2)-(1-hydroxy-2-oxoethyl)-GDP + H2O = glycolate + GDP + H(+)</text>
        <dbReference type="Rhea" id="RHEA:57264"/>
        <dbReference type="ChEBI" id="CHEBI:15377"/>
        <dbReference type="ChEBI" id="CHEBI:15378"/>
        <dbReference type="ChEBI" id="CHEBI:29805"/>
        <dbReference type="ChEBI" id="CHEBI:58189"/>
        <dbReference type="ChEBI" id="CHEBI:141574"/>
    </reaction>
</comment>
<comment type="catalytic activity">
    <reaction evidence="1">
        <text>N(2)-(1-hydroxy-2-oxoethyl)-GMP + H2O = glycolate + GMP + H(+)</text>
        <dbReference type="Rhea" id="RHEA:57304"/>
        <dbReference type="ChEBI" id="CHEBI:15377"/>
        <dbReference type="ChEBI" id="CHEBI:15378"/>
        <dbReference type="ChEBI" id="CHEBI:29805"/>
        <dbReference type="ChEBI" id="CHEBI:58115"/>
        <dbReference type="ChEBI" id="CHEBI:141576"/>
    </reaction>
</comment>
<comment type="catalytic activity">
    <reaction evidence="1">
        <text>an N(2)-(1-hydroxy-2-oxopropyl)-guanosine in RNA + H2O = a guanosine in RNA + lactate + H(+)</text>
        <dbReference type="Rhea" id="RHEA:57288"/>
        <dbReference type="Rhea" id="RHEA-COMP:14855"/>
        <dbReference type="Rhea" id="RHEA-COMP:14858"/>
        <dbReference type="ChEBI" id="CHEBI:15377"/>
        <dbReference type="ChEBI" id="CHEBI:15378"/>
        <dbReference type="ChEBI" id="CHEBI:24996"/>
        <dbReference type="ChEBI" id="CHEBI:74269"/>
        <dbReference type="ChEBI" id="CHEBI:141580"/>
    </reaction>
</comment>
<comment type="catalytic activity">
    <reaction evidence="1">
        <text>an N(2)-(1-hydroxy-2-oxopropyl)-2'-deoxyguanosine in DNA + H2O = a 2'-deoxyguanosine in DNA + lactate + H(+)</text>
        <dbReference type="Rhea" id="RHEA:57300"/>
        <dbReference type="Rhea" id="RHEA-COMP:11367"/>
        <dbReference type="Rhea" id="RHEA-COMP:14856"/>
        <dbReference type="ChEBI" id="CHEBI:15377"/>
        <dbReference type="ChEBI" id="CHEBI:15378"/>
        <dbReference type="ChEBI" id="CHEBI:24996"/>
        <dbReference type="ChEBI" id="CHEBI:85445"/>
        <dbReference type="ChEBI" id="CHEBI:141578"/>
    </reaction>
</comment>
<comment type="catalytic activity">
    <reaction evidence="1">
        <text>an N(2)-(1-hydroxy-2-oxoethyl)-guanosine in RNA + H2O = a guanosine in RNA + glycolate + H(+)</text>
        <dbReference type="Rhea" id="RHEA:57292"/>
        <dbReference type="Rhea" id="RHEA-COMP:14855"/>
        <dbReference type="Rhea" id="RHEA-COMP:14859"/>
        <dbReference type="ChEBI" id="CHEBI:15377"/>
        <dbReference type="ChEBI" id="CHEBI:15378"/>
        <dbReference type="ChEBI" id="CHEBI:29805"/>
        <dbReference type="ChEBI" id="CHEBI:74269"/>
        <dbReference type="ChEBI" id="CHEBI:141581"/>
    </reaction>
</comment>
<comment type="catalytic activity">
    <reaction evidence="1">
        <text>an N(2)-(1-hydroxy-2-oxoethyl)-2'-deoxyguanosine in DNA + H2O = a 2'-deoxyguanosine in DNA + glycolate + H(+)</text>
        <dbReference type="Rhea" id="RHEA:57296"/>
        <dbReference type="Rhea" id="RHEA-COMP:11367"/>
        <dbReference type="Rhea" id="RHEA-COMP:14857"/>
        <dbReference type="ChEBI" id="CHEBI:15377"/>
        <dbReference type="ChEBI" id="CHEBI:15378"/>
        <dbReference type="ChEBI" id="CHEBI:29805"/>
        <dbReference type="ChEBI" id="CHEBI:85445"/>
        <dbReference type="ChEBI" id="CHEBI:141579"/>
    </reaction>
</comment>
<comment type="subunit">
    <text evidence="1">Homodimer.</text>
</comment>
<comment type="subcellular location">
    <subcellularLocation>
        <location evidence="1">Cytoplasm</location>
    </subcellularLocation>
</comment>
<comment type="induction">
    <text evidence="1">By heat shock.</text>
</comment>
<comment type="similarity">
    <text evidence="1">Belongs to the peptidase C56 family. HchA subfamily.</text>
</comment>
<dbReference type="EC" id="3.1.2.-" evidence="1"/>
<dbReference type="EC" id="3.5.1.-" evidence="1"/>
<dbReference type="EC" id="3.5.1.124" evidence="1"/>
<dbReference type="EMBL" id="CU928161">
    <property type="protein sequence ID" value="CAR03317.1"/>
    <property type="molecule type" value="Genomic_DNA"/>
</dbReference>
<dbReference type="RefSeq" id="WP_000218046.1">
    <property type="nucleotide sequence ID" value="NC_011742.1"/>
</dbReference>
<dbReference type="SMR" id="B7MCM0"/>
<dbReference type="MEROPS" id="C56.006"/>
<dbReference type="KEGG" id="ecz:ECS88_2019"/>
<dbReference type="HOGENOM" id="CLU_066933_0_0_6"/>
<dbReference type="Proteomes" id="UP000000747">
    <property type="component" value="Chromosome"/>
</dbReference>
<dbReference type="GO" id="GO:0005737">
    <property type="term" value="C:cytoplasm"/>
    <property type="evidence" value="ECO:0007669"/>
    <property type="project" value="UniProtKB-SubCell"/>
</dbReference>
<dbReference type="GO" id="GO:0019172">
    <property type="term" value="F:glyoxalase III activity"/>
    <property type="evidence" value="ECO:0007669"/>
    <property type="project" value="TreeGrafter"/>
</dbReference>
<dbReference type="GO" id="GO:0036524">
    <property type="term" value="F:protein deglycase activity"/>
    <property type="evidence" value="ECO:0007669"/>
    <property type="project" value="UniProtKB-UniRule"/>
</dbReference>
<dbReference type="GO" id="GO:0016790">
    <property type="term" value="F:thiolester hydrolase activity"/>
    <property type="evidence" value="ECO:0007669"/>
    <property type="project" value="UniProtKB-UniRule"/>
</dbReference>
<dbReference type="GO" id="GO:0008270">
    <property type="term" value="F:zinc ion binding"/>
    <property type="evidence" value="ECO:0007669"/>
    <property type="project" value="UniProtKB-UniRule"/>
</dbReference>
<dbReference type="GO" id="GO:0006281">
    <property type="term" value="P:DNA repair"/>
    <property type="evidence" value="ECO:0007669"/>
    <property type="project" value="UniProtKB-UniRule"/>
</dbReference>
<dbReference type="GO" id="GO:0019243">
    <property type="term" value="P:methylglyoxal catabolic process to D-lactate via S-lactoyl-glutathione"/>
    <property type="evidence" value="ECO:0007669"/>
    <property type="project" value="TreeGrafter"/>
</dbReference>
<dbReference type="GO" id="GO:0030091">
    <property type="term" value="P:protein repair"/>
    <property type="evidence" value="ECO:0007669"/>
    <property type="project" value="UniProtKB-UniRule"/>
</dbReference>
<dbReference type="Gene3D" id="3.40.50.880">
    <property type="match status" value="1"/>
</dbReference>
<dbReference type="HAMAP" id="MF_01046">
    <property type="entry name" value="Deglycase_HchA"/>
    <property type="match status" value="1"/>
</dbReference>
<dbReference type="InterPro" id="IPR029062">
    <property type="entry name" value="Class_I_gatase-like"/>
</dbReference>
<dbReference type="InterPro" id="IPR017283">
    <property type="entry name" value="HchA"/>
</dbReference>
<dbReference type="InterPro" id="IPR050325">
    <property type="entry name" value="Prot/Nucl_acid_deglycase"/>
</dbReference>
<dbReference type="NCBIfam" id="NF003168">
    <property type="entry name" value="PRK04155.1"/>
    <property type="match status" value="1"/>
</dbReference>
<dbReference type="PANTHER" id="PTHR48094">
    <property type="entry name" value="PROTEIN/NUCLEIC ACID DEGLYCASE DJ-1-RELATED"/>
    <property type="match status" value="1"/>
</dbReference>
<dbReference type="PANTHER" id="PTHR48094:SF20">
    <property type="entry name" value="PROTEIN_NUCLEIC ACID DEGLYCASE 1"/>
    <property type="match status" value="1"/>
</dbReference>
<dbReference type="PIRSF" id="PIRSF037798">
    <property type="entry name" value="Chaperone_HchA"/>
    <property type="match status" value="1"/>
</dbReference>
<dbReference type="SUPFAM" id="SSF52317">
    <property type="entry name" value="Class I glutamine amidotransferase-like"/>
    <property type="match status" value="1"/>
</dbReference>
<proteinExistence type="inferred from homology"/>
<protein>
    <recommendedName>
        <fullName evidence="1">Protein/nucleic acid deglycase HchA</fullName>
        <ecNumber evidence="1">3.1.2.-</ecNumber>
        <ecNumber evidence="1">3.5.1.-</ecNumber>
        <ecNumber evidence="1">3.5.1.124</ecNumber>
    </recommendedName>
    <alternativeName>
        <fullName evidence="1">Maillard deglycase</fullName>
    </alternativeName>
</protein>
<keyword id="KW-0963">Cytoplasm</keyword>
<keyword id="KW-0227">DNA damage</keyword>
<keyword id="KW-0234">DNA repair</keyword>
<keyword id="KW-0378">Hydrolase</keyword>
<keyword id="KW-0479">Metal-binding</keyword>
<keyword id="KW-1185">Reference proteome</keyword>
<keyword id="KW-0346">Stress response</keyword>
<keyword id="KW-0862">Zinc</keyword>
<feature type="chain" id="PRO_1000136174" description="Protein/nucleic acid deglycase HchA">
    <location>
        <begin position="1"/>
        <end position="283"/>
    </location>
</feature>
<feature type="active site" description="Nucleophile" evidence="1">
    <location>
        <position position="185"/>
    </location>
</feature>
<feature type="binding site" evidence="1">
    <location>
        <position position="86"/>
    </location>
    <ligand>
        <name>Zn(2+)</name>
        <dbReference type="ChEBI" id="CHEBI:29105"/>
    </ligand>
</feature>
<feature type="binding site" evidence="1">
    <location>
        <position position="91"/>
    </location>
    <ligand>
        <name>Zn(2+)</name>
        <dbReference type="ChEBI" id="CHEBI:29105"/>
    </ligand>
</feature>
<feature type="binding site" evidence="1">
    <location>
        <position position="123"/>
    </location>
    <ligand>
        <name>Zn(2+)</name>
        <dbReference type="ChEBI" id="CHEBI:29105"/>
    </ligand>
</feature>
<gene>
    <name evidence="1" type="primary">hchA</name>
    <name type="ordered locus">ECS88_2019</name>
</gene>
<reference key="1">
    <citation type="journal article" date="2009" name="PLoS Genet.">
        <title>Organised genome dynamics in the Escherichia coli species results in highly diverse adaptive paths.</title>
        <authorList>
            <person name="Touchon M."/>
            <person name="Hoede C."/>
            <person name="Tenaillon O."/>
            <person name="Barbe V."/>
            <person name="Baeriswyl S."/>
            <person name="Bidet P."/>
            <person name="Bingen E."/>
            <person name="Bonacorsi S."/>
            <person name="Bouchier C."/>
            <person name="Bouvet O."/>
            <person name="Calteau A."/>
            <person name="Chiapello H."/>
            <person name="Clermont O."/>
            <person name="Cruveiller S."/>
            <person name="Danchin A."/>
            <person name="Diard M."/>
            <person name="Dossat C."/>
            <person name="Karoui M.E."/>
            <person name="Frapy E."/>
            <person name="Garry L."/>
            <person name="Ghigo J.M."/>
            <person name="Gilles A.M."/>
            <person name="Johnson J."/>
            <person name="Le Bouguenec C."/>
            <person name="Lescat M."/>
            <person name="Mangenot S."/>
            <person name="Martinez-Jehanne V."/>
            <person name="Matic I."/>
            <person name="Nassif X."/>
            <person name="Oztas S."/>
            <person name="Petit M.A."/>
            <person name="Pichon C."/>
            <person name="Rouy Z."/>
            <person name="Ruf C.S."/>
            <person name="Schneider D."/>
            <person name="Tourret J."/>
            <person name="Vacherie B."/>
            <person name="Vallenet D."/>
            <person name="Medigue C."/>
            <person name="Rocha E.P.C."/>
            <person name="Denamur E."/>
        </authorList>
    </citation>
    <scope>NUCLEOTIDE SEQUENCE [LARGE SCALE GENOMIC DNA]</scope>
    <source>
        <strain>S88 / ExPEC</strain>
    </source>
</reference>
<sequence length="283" mass="31205">MTVQKSKNPQVDIAEDNAFFPSEYSLSQYTSPVSDLDGVDYPKPYRGKHKILVIAADERYLPTDNGKLFSTGNHPIETLLPLYHLHAAGFEFEVATISGLMTKFEYWAMPHKDEKVMPFFEQHKSLFRNPKKLADVVASLNADSEYAAIFVPGGHGALIGLPESEDVAAALQWAIENDRFVISLCHGPAAFLALRHGDNPLNGYSICAFPDAADKQTPEIGYMPGHLTWYFGEELKKMGMNIINDDITGRVHKDRKVLTGDSPFAANALGKLAAQEMLAAYAG</sequence>